<feature type="signal peptide" evidence="1">
    <location>
        <begin position="1"/>
        <end position="33"/>
    </location>
</feature>
<feature type="chain" id="PRO_0000041789" description="Flagellar P-ring protein">
    <location>
        <begin position="34"/>
        <end position="389"/>
    </location>
</feature>
<proteinExistence type="inferred from homology"/>
<evidence type="ECO:0000255" key="1">
    <source>
        <dbReference type="HAMAP-Rule" id="MF_00416"/>
    </source>
</evidence>
<evidence type="ECO:0000305" key="2"/>
<name>FLGI_BURMA</name>
<protein>
    <recommendedName>
        <fullName evidence="1">Flagellar P-ring protein</fullName>
    </recommendedName>
    <alternativeName>
        <fullName evidence="1">Basal body P-ring protein</fullName>
    </alternativeName>
</protein>
<accession>Q62ES6</accession>
<organism>
    <name type="scientific">Burkholderia mallei (strain ATCC 23344)</name>
    <dbReference type="NCBI Taxonomy" id="243160"/>
    <lineage>
        <taxon>Bacteria</taxon>
        <taxon>Pseudomonadati</taxon>
        <taxon>Pseudomonadota</taxon>
        <taxon>Betaproteobacteria</taxon>
        <taxon>Burkholderiales</taxon>
        <taxon>Burkholderiaceae</taxon>
        <taxon>Burkholderia</taxon>
        <taxon>pseudomallei group</taxon>
    </lineage>
</organism>
<gene>
    <name evidence="1" type="primary">flgI</name>
    <name type="ordered locus">BMA3332</name>
</gene>
<dbReference type="EMBL" id="CP000010">
    <property type="protein sequence ID" value="AAU48585.1"/>
    <property type="status" value="ALT_INIT"/>
    <property type="molecule type" value="Genomic_DNA"/>
</dbReference>
<dbReference type="SMR" id="Q62ES6"/>
<dbReference type="KEGG" id="bma:BMA3332"/>
<dbReference type="eggNOG" id="COG1706">
    <property type="taxonomic scope" value="Bacteria"/>
</dbReference>
<dbReference type="HOGENOM" id="CLU_045235_1_0_4"/>
<dbReference type="Proteomes" id="UP000006693">
    <property type="component" value="Chromosome 1"/>
</dbReference>
<dbReference type="GO" id="GO:0009428">
    <property type="term" value="C:bacterial-type flagellum basal body, distal rod, P ring"/>
    <property type="evidence" value="ECO:0007669"/>
    <property type="project" value="InterPro"/>
</dbReference>
<dbReference type="GO" id="GO:0030288">
    <property type="term" value="C:outer membrane-bounded periplasmic space"/>
    <property type="evidence" value="ECO:0007669"/>
    <property type="project" value="InterPro"/>
</dbReference>
<dbReference type="GO" id="GO:0005198">
    <property type="term" value="F:structural molecule activity"/>
    <property type="evidence" value="ECO:0007669"/>
    <property type="project" value="InterPro"/>
</dbReference>
<dbReference type="GO" id="GO:0071973">
    <property type="term" value="P:bacterial-type flagellum-dependent cell motility"/>
    <property type="evidence" value="ECO:0007669"/>
    <property type="project" value="InterPro"/>
</dbReference>
<dbReference type="HAMAP" id="MF_00416">
    <property type="entry name" value="FlgI"/>
    <property type="match status" value="1"/>
</dbReference>
<dbReference type="InterPro" id="IPR001782">
    <property type="entry name" value="Flag_FlgI"/>
</dbReference>
<dbReference type="NCBIfam" id="NF003676">
    <property type="entry name" value="PRK05303.1"/>
    <property type="match status" value="1"/>
</dbReference>
<dbReference type="PANTHER" id="PTHR30381">
    <property type="entry name" value="FLAGELLAR P-RING PERIPLASMIC PROTEIN FLGI"/>
    <property type="match status" value="1"/>
</dbReference>
<dbReference type="PANTHER" id="PTHR30381:SF0">
    <property type="entry name" value="FLAGELLAR P-RING PROTEIN"/>
    <property type="match status" value="1"/>
</dbReference>
<dbReference type="Pfam" id="PF02119">
    <property type="entry name" value="FlgI"/>
    <property type="match status" value="1"/>
</dbReference>
<dbReference type="PRINTS" id="PR01010">
    <property type="entry name" value="FLGPRINGFLGI"/>
</dbReference>
<keyword id="KW-0975">Bacterial flagellum</keyword>
<keyword id="KW-0574">Periplasm</keyword>
<keyword id="KW-1185">Reference proteome</keyword>
<keyword id="KW-0732">Signal</keyword>
<sequence length="389" mass="39637">MRPLVAARRRAAACCALAACMLALAFAPAAARAERLKDLAQIQGVRDNPLIGYGLVVGLDGTGDQTMQTPFTTQTLANMLANLGISINNGSANGGGSSAMTNMQLKNVAAVMVTATLPPFARPGEAIDVTVSSLGNAKSLRGGTLLLTPLKGADGQVYALAQGNMAVGGAGASANGSRVQVNQLAAGRIAGGAIVERSVPNAVAQMNGVLQLQLNDMDYGTAQRIVSAVNSSFGAGTATALDGRTIQLTAPADSAQQVAFMARLQNLEVSPERAAAKVILNARTGSIVMNQMVTLQNCAVAHGNLSVVVNTQPVVSQPGPFSNGQTVVAQQSQIQLKQDNGSLRMVTAGANLAEVVKALNSLGATPADLMSILQAMKAAGALRADLEII</sequence>
<comment type="function">
    <text evidence="1">Assembles around the rod to form the L-ring and probably protects the motor/basal body from shearing forces during rotation.</text>
</comment>
<comment type="subunit">
    <text evidence="1">The basal body constitutes a major portion of the flagellar organelle and consists of four rings (L,P,S, and M) mounted on a central rod.</text>
</comment>
<comment type="subcellular location">
    <subcellularLocation>
        <location evidence="1">Periplasm</location>
    </subcellularLocation>
    <subcellularLocation>
        <location evidence="1">Bacterial flagellum basal body</location>
    </subcellularLocation>
</comment>
<comment type="similarity">
    <text evidence="1">Belongs to the FlgI family.</text>
</comment>
<comment type="sequence caution" evidence="2">
    <conflict type="erroneous initiation">
        <sequence resource="EMBL-CDS" id="AAU48585"/>
    </conflict>
</comment>
<reference key="1">
    <citation type="journal article" date="2004" name="Proc. Natl. Acad. Sci. U.S.A.">
        <title>Structural flexibility in the Burkholderia mallei genome.</title>
        <authorList>
            <person name="Nierman W.C."/>
            <person name="DeShazer D."/>
            <person name="Kim H.S."/>
            <person name="Tettelin H."/>
            <person name="Nelson K.E."/>
            <person name="Feldblyum T.V."/>
            <person name="Ulrich R.L."/>
            <person name="Ronning C.M."/>
            <person name="Brinkac L.M."/>
            <person name="Daugherty S.C."/>
            <person name="Davidsen T.D."/>
            <person name="DeBoy R.T."/>
            <person name="Dimitrov G."/>
            <person name="Dodson R.J."/>
            <person name="Durkin A.S."/>
            <person name="Gwinn M.L."/>
            <person name="Haft D.H."/>
            <person name="Khouri H.M."/>
            <person name="Kolonay J.F."/>
            <person name="Madupu R."/>
            <person name="Mohammoud Y."/>
            <person name="Nelson W.C."/>
            <person name="Radune D."/>
            <person name="Romero C.M."/>
            <person name="Sarria S."/>
            <person name="Selengut J."/>
            <person name="Shamblin C."/>
            <person name="Sullivan S.A."/>
            <person name="White O."/>
            <person name="Yu Y."/>
            <person name="Zafar N."/>
            <person name="Zhou L."/>
            <person name="Fraser C.M."/>
        </authorList>
    </citation>
    <scope>NUCLEOTIDE SEQUENCE [LARGE SCALE GENOMIC DNA]</scope>
    <source>
        <strain>ATCC 23344</strain>
    </source>
</reference>